<accession>F1SVH9</accession>
<accession>Q7LWK0</accession>
<accession>Q9P9F4</accession>
<gene>
    <name type="primary">fpoM</name>
    <name type="ordered locus">MM_2481</name>
</gene>
<name>FPOM_METMA</name>
<evidence type="ECO:0000255" key="1"/>
<evidence type="ECO:0000269" key="2">
    <source>
    </source>
</evidence>
<evidence type="ECO:0000269" key="3">
    <source ref="1"/>
</evidence>
<evidence type="ECO:0000305" key="4"/>
<proteinExistence type="evidence at protein level"/>
<reference key="1">
    <citation type="journal article" date="1997" name="FEMS Microbiol. Lett.">
        <title>Purification and properties of an F420H2 dehydrogenase from Methanosarcina mazei Go1.</title>
        <authorList>
            <person name="Abken H.-J."/>
            <person name="Deppenmeier U."/>
        </authorList>
    </citation>
    <scope>NUCLEOTIDE SEQUENCE [GENOMIC DNA]</scope>
    <scope>FUNCTION</scope>
    <scope>CATALYTIC ACTIVITY</scope>
    <scope>BIOPHYSICOCHEMICAL PROPERTIES</scope>
    <scope>SUBSTRATE SPECIFICITY</scope>
    <scope>SUBCELLULAR LOCATION</scope>
    <source>
        <strain>ATCC BAA-159 / DSM 3647 / Goe1 / Go1 / JCM 11833 / OCM 88</strain>
    </source>
</reference>
<reference key="2">
    <citation type="journal article" date="2000" name="J. Biol. Chem.">
        <title>The F420H2 dehydrogenase from Methanosarcina mazei is a Redox-driven proton pump closely related to NADH dehydrogenases.</title>
        <authorList>
            <person name="Baumer S."/>
            <person name="Ide T."/>
            <person name="Jacobi C."/>
            <person name="Johann A."/>
            <person name="Gottschalk G."/>
            <person name="Deppenmeier U."/>
        </authorList>
    </citation>
    <scope>NUCLEOTIDE SEQUENCE [GENOMIC DNA]</scope>
    <scope>FUNCTION IN THE PROTON TRANSLOCATION</scope>
    <scope>SUBUNIT</scope>
    <scope>NOMENCLATURE</scope>
    <source>
        <strain>ATCC BAA-159 / DSM 3647 / Goe1 / Go1 / JCM 11833 / OCM 88</strain>
    </source>
</reference>
<reference key="3">
    <citation type="journal article" date="2002" name="J. Mol. Microbiol. Biotechnol.">
        <title>The genome of Methanosarcina mazei: evidence for lateral gene transfer between Bacteria and Archaea.</title>
        <authorList>
            <person name="Deppenmeier U."/>
            <person name="Johann A."/>
            <person name="Hartsch T."/>
            <person name="Merkl R."/>
            <person name="Schmitz R.A."/>
            <person name="Martinez-Arias R."/>
            <person name="Henne A."/>
            <person name="Wiezer A."/>
            <person name="Baeumer S."/>
            <person name="Jacobi C."/>
            <person name="Brueggemann H."/>
            <person name="Lienard T."/>
            <person name="Christmann A."/>
            <person name="Boemecke M."/>
            <person name="Steckel S."/>
            <person name="Bhattacharyya A."/>
            <person name="Lykidis A."/>
            <person name="Overbeek R."/>
            <person name="Klenk H.-P."/>
            <person name="Gunsalus R.P."/>
            <person name="Fritz H.-J."/>
            <person name="Gottschalk G."/>
        </authorList>
    </citation>
    <scope>NUCLEOTIDE SEQUENCE [LARGE SCALE GENOMIC DNA]</scope>
    <source>
        <strain>ATCC BAA-159 / DSM 3647 / Goe1 / Go1 / JCM 11833 / OCM 88</strain>
    </source>
</reference>
<dbReference type="EC" id="1.5.98.3" evidence="3"/>
<dbReference type="EMBL" id="AE008384">
    <property type="protein sequence ID" value="AAM32177.1"/>
    <property type="molecule type" value="Genomic_DNA"/>
</dbReference>
<dbReference type="EMBL" id="AF228525">
    <property type="protein sequence ID" value="AAF65740.1"/>
    <property type="molecule type" value="Genomic_DNA"/>
</dbReference>
<dbReference type="RefSeq" id="WP_011034399.1">
    <property type="nucleotide sequence ID" value="NC_003901.1"/>
</dbReference>
<dbReference type="SMR" id="F1SVH9"/>
<dbReference type="TCDB" id="3.D.13.1.1">
    <property type="family name" value="the h+ extruding f420 dehydrogenase (fpo) complex family"/>
</dbReference>
<dbReference type="TCDB" id="3.D.9.1.1">
    <property type="family name" value="the h(+)-translocating f420h2 dehydrogenase (f420h2dh) family"/>
</dbReference>
<dbReference type="GeneID" id="82161557"/>
<dbReference type="KEGG" id="mma:MM_2481"/>
<dbReference type="PATRIC" id="fig|192952.21.peg.2839"/>
<dbReference type="eggNOG" id="arCOG01538">
    <property type="taxonomic scope" value="Archaea"/>
</dbReference>
<dbReference type="HOGENOM" id="CLU_007100_4_4_2"/>
<dbReference type="BRENDA" id="1.12.98.3">
    <property type="organism ID" value="3270"/>
</dbReference>
<dbReference type="Proteomes" id="UP000000595">
    <property type="component" value="Chromosome"/>
</dbReference>
<dbReference type="GO" id="GO:0005886">
    <property type="term" value="C:plasma membrane"/>
    <property type="evidence" value="ECO:0007669"/>
    <property type="project" value="UniProtKB-SubCell"/>
</dbReference>
<dbReference type="GO" id="GO:0051911">
    <property type="term" value="F:Methanosarcina-phenazine hydrogenase activity"/>
    <property type="evidence" value="ECO:0007669"/>
    <property type="project" value="UniProtKB-EC"/>
</dbReference>
<dbReference type="GO" id="GO:0008137">
    <property type="term" value="F:NADH dehydrogenase (ubiquinone) activity"/>
    <property type="evidence" value="ECO:0007669"/>
    <property type="project" value="InterPro"/>
</dbReference>
<dbReference type="GO" id="GO:0043738">
    <property type="term" value="F:reduced coenzyme F420 dehydrogenase activity"/>
    <property type="evidence" value="ECO:0007669"/>
    <property type="project" value="RHEA"/>
</dbReference>
<dbReference type="GO" id="GO:0048039">
    <property type="term" value="F:ubiquinone binding"/>
    <property type="evidence" value="ECO:0007669"/>
    <property type="project" value="TreeGrafter"/>
</dbReference>
<dbReference type="GO" id="GO:0042773">
    <property type="term" value="P:ATP synthesis coupled electron transport"/>
    <property type="evidence" value="ECO:0007669"/>
    <property type="project" value="InterPro"/>
</dbReference>
<dbReference type="GO" id="GO:0015990">
    <property type="term" value="P:electron transport coupled proton transport"/>
    <property type="evidence" value="ECO:0007669"/>
    <property type="project" value="TreeGrafter"/>
</dbReference>
<dbReference type="GO" id="GO:0015948">
    <property type="term" value="P:methanogenesis"/>
    <property type="evidence" value="ECO:0007669"/>
    <property type="project" value="UniProtKB-KW"/>
</dbReference>
<dbReference type="GO" id="GO:0015945">
    <property type="term" value="P:methanol metabolic process"/>
    <property type="evidence" value="ECO:0007669"/>
    <property type="project" value="UniProtKB-KW"/>
</dbReference>
<dbReference type="InterPro" id="IPR010227">
    <property type="entry name" value="NADH_Q_OxRdtase_chainM/4"/>
</dbReference>
<dbReference type="InterPro" id="IPR003918">
    <property type="entry name" value="NADH_UbQ_OxRdtase"/>
</dbReference>
<dbReference type="InterPro" id="IPR001750">
    <property type="entry name" value="ND/Mrp_TM"/>
</dbReference>
<dbReference type="NCBIfam" id="TIGR01972">
    <property type="entry name" value="NDH_I_M"/>
    <property type="match status" value="1"/>
</dbReference>
<dbReference type="PANTHER" id="PTHR43507">
    <property type="entry name" value="NADH-UBIQUINONE OXIDOREDUCTASE CHAIN 4"/>
    <property type="match status" value="1"/>
</dbReference>
<dbReference type="PANTHER" id="PTHR43507:SF1">
    <property type="entry name" value="NADH-UBIQUINONE OXIDOREDUCTASE CHAIN 4"/>
    <property type="match status" value="1"/>
</dbReference>
<dbReference type="Pfam" id="PF00361">
    <property type="entry name" value="Proton_antipo_M"/>
    <property type="match status" value="1"/>
</dbReference>
<dbReference type="PRINTS" id="PR01437">
    <property type="entry name" value="NUOXDRDTASE4"/>
</dbReference>
<comment type="function">
    <text evidence="2 3">Component of the F(420)H(2) dehydrogenase (FPO complex) which is part of the energy-conserving F(420)H(2):heterodisulfide oxidoreductase system. The membrane-bound electron transfer system of the complex plays an important role in the metabolism of methylotrophic methanogens when the organisms grow on methanol or methylamines. Catalyzes the oxidation of methanophenazine to dihydromethanophenazine. It shuttles electrons from F(420)H(2), via FAD and iron-sulfur (Fe-S) centers, to methanophenazine (an electron carrier in the membrane). It couples the redox reaction to proton translocation (for every two electrons transferred, two hydrogen ions are translocated across the cytoplasmic membrane), and thus conserves the redox energy in a proton gradient. It also catalyzes the oxidation of F(420)H(2) with quinones such as 2,3-dimethyl-1,4-naphthoquinone, 2-methyl-1,4-naphthoquinone and tetramethyl-p-benzoquinone.</text>
</comment>
<comment type="catalytic activity">
    <reaction evidence="3">
        <text>methanophenazine + reduced coenzyme F420-(gamma-L-Glu)(n) = dihydromethanophenazine + oxidized coenzyme F420-(gamma-L-Glu)(n) + H(+)</text>
        <dbReference type="Rhea" id="RHEA:54752"/>
        <dbReference type="Rhea" id="RHEA-COMP:12939"/>
        <dbReference type="Rhea" id="RHEA-COMP:14378"/>
        <dbReference type="ChEBI" id="CHEBI:15378"/>
        <dbReference type="ChEBI" id="CHEBI:29118"/>
        <dbReference type="ChEBI" id="CHEBI:50375"/>
        <dbReference type="ChEBI" id="CHEBI:133980"/>
        <dbReference type="ChEBI" id="CHEBI:139511"/>
        <dbReference type="EC" id="1.5.98.3"/>
    </reaction>
</comment>
<comment type="biophysicochemical properties">
    <kinetics>
        <KM evidence="3">7 uM for F(420)H(2) (at 37 degrees Celsius and pH 7)</KM>
        <Vmax evidence="3">17.0 umol/min/mg enzyme (at 37 degrees Celsius and pH 7)</Vmax>
        <text>Measured for the whole complex.</text>
    </kinetics>
    <phDependence>
        <text evidence="3">Optimum pH is 8.5.</text>
    </phDependence>
    <temperatureDependence>
        <text evidence="3">Optimum temperature is 39 degrees Celsius.</text>
    </temperatureDependence>
</comment>
<comment type="subunit">
    <text evidence="2">The FPO complex is composed of at least 13 different subunits. FpoA, FpoH, FpoJ, FpoK, FpoL, FpoM and FpoN proteins constitute the membrane sector of the complex.</text>
</comment>
<comment type="subcellular location">
    <subcellularLocation>
        <location evidence="4">Cell membrane</location>
        <topology evidence="4">Multi-pass membrane protein</topology>
    </subcellularLocation>
</comment>
<comment type="similarity">
    <text evidence="4">Belongs to the complex I subunit 4 family.</text>
</comment>
<protein>
    <recommendedName>
        <fullName>F(420)H(2) dehydrogenase subunit M</fullName>
        <ecNumber evidence="3">1.5.98.3</ecNumber>
    </recommendedName>
    <alternativeName>
        <fullName>F(420)H(2)-dependent phenazine dehydrogenase subunit M</fullName>
    </alternativeName>
    <alternativeName>
        <fullName>F(420)H(2)-dependent phenazine oxidoreductase subunit M</fullName>
        <shortName>FPO subunit M</shortName>
    </alternativeName>
    <alternativeName>
        <fullName>Methanophenazine hydrogenase subunit M</fullName>
    </alternativeName>
    <alternativeName>
        <fullName>Methanosarcina-phenazine hydrogenase subunit M</fullName>
    </alternativeName>
</protein>
<keyword id="KW-1003">Cell membrane</keyword>
<keyword id="KW-0249">Electron transport</keyword>
<keyword id="KW-0472">Membrane</keyword>
<keyword id="KW-0484">Methanogenesis</keyword>
<keyword id="KW-0485">Methanol utilization</keyword>
<keyword id="KW-0560">Oxidoreductase</keyword>
<keyword id="KW-0812">Transmembrane</keyword>
<keyword id="KW-1133">Transmembrane helix</keyword>
<keyword id="KW-0813">Transport</keyword>
<organism>
    <name type="scientific">Methanosarcina mazei (strain ATCC BAA-159 / DSM 3647 / Goe1 / Go1 / JCM 11833 / OCM 88)</name>
    <name type="common">Methanosarcina frisia</name>
    <dbReference type="NCBI Taxonomy" id="192952"/>
    <lineage>
        <taxon>Archaea</taxon>
        <taxon>Methanobacteriati</taxon>
        <taxon>Methanobacteriota</taxon>
        <taxon>Stenosarchaea group</taxon>
        <taxon>Methanomicrobia</taxon>
        <taxon>Methanosarcinales</taxon>
        <taxon>Methanosarcinaceae</taxon>
        <taxon>Methanosarcina</taxon>
    </lineage>
</organism>
<feature type="chain" id="PRO_0000423958" description="F(420)H(2) dehydrogenase subunit M">
    <location>
        <begin position="1"/>
        <end position="495"/>
    </location>
</feature>
<feature type="transmembrane region" description="Helical" evidence="1">
    <location>
        <begin position="1"/>
        <end position="21"/>
    </location>
</feature>
<feature type="transmembrane region" description="Helical" evidence="1">
    <location>
        <begin position="27"/>
        <end position="47"/>
    </location>
</feature>
<feature type="transmembrane region" description="Helical" evidence="1">
    <location>
        <begin position="57"/>
        <end position="77"/>
    </location>
</feature>
<feature type="transmembrane region" description="Helical" evidence="1">
    <location>
        <begin position="80"/>
        <end position="100"/>
    </location>
</feature>
<feature type="transmembrane region" description="Helical" evidence="1">
    <location>
        <begin position="108"/>
        <end position="128"/>
    </location>
</feature>
<feature type="transmembrane region" description="Helical" evidence="1">
    <location>
        <begin position="130"/>
        <end position="150"/>
    </location>
</feature>
<feature type="transmembrane region" description="Helical" evidence="1">
    <location>
        <begin position="163"/>
        <end position="183"/>
    </location>
</feature>
<feature type="transmembrane region" description="Helical" evidence="1">
    <location>
        <begin position="215"/>
        <end position="235"/>
    </location>
</feature>
<feature type="transmembrane region" description="Helical" evidence="1">
    <location>
        <begin position="249"/>
        <end position="269"/>
    </location>
</feature>
<feature type="transmembrane region" description="Helical" evidence="1">
    <location>
        <begin position="277"/>
        <end position="297"/>
    </location>
</feature>
<feature type="transmembrane region" description="Helical" evidence="1">
    <location>
        <begin position="315"/>
        <end position="335"/>
    </location>
</feature>
<feature type="transmembrane region" description="Helical" evidence="1">
    <location>
        <begin position="338"/>
        <end position="358"/>
    </location>
</feature>
<feature type="transmembrane region" description="Helical" evidence="1">
    <location>
        <begin position="378"/>
        <end position="398"/>
    </location>
</feature>
<feature type="transmembrane region" description="Helical" evidence="1">
    <location>
        <begin position="412"/>
        <end position="432"/>
    </location>
</feature>
<feature type="transmembrane region" description="Helical" evidence="1">
    <location>
        <begin position="450"/>
        <end position="470"/>
    </location>
</feature>
<sequence>MLPVASLLILVPLIFAVVTFFTKTKQLAAGFGFLGSLATLGLTLYAYLNFDSSTAAMQFYESVSWIPFLGVNYSVGIDGVSMPLILLNAIVIPFMILFTWKEEMESPNRFYGLILTMQAAVIGVFVALDFVVFYIFWELTLVPLFFIVNLWGGANRAHASYKFFIYTHVASLVMLLGIFGLFYTALNQTGVPTFDIRELIAQFQFFEPGLMKDGIFLAILFGFLAKLPAFPFHSWLPDAYSEAPTAGSILFILLKIGGYGLFRISLPMLPNTGSPQLMIMILGLLGSVSILYGALLALRQKDLKRMIAYSSLSHMGYVILGSAGLVTLSVSGAMFQQFSHGLIMSIMFMSAGAIQTAAGTRIINELGGLAKKMPMLTVAMMVGFMASLGLPGLTGFIAEFLVLTFTFTNLPVFVVIALLAIVVTAGYHLWAMQRAMFGVYNEKLGDVRDINSIQVFSMAVIALLVLYFGLNPSPVLDMMINNSEAIVSLAAGMGV</sequence>